<keyword id="KW-0067">ATP-binding</keyword>
<keyword id="KW-0418">Kinase</keyword>
<keyword id="KW-0460">Magnesium</keyword>
<keyword id="KW-0479">Metal-binding</keyword>
<keyword id="KW-0547">Nucleotide-binding</keyword>
<keyword id="KW-0784">Thiamine biosynthesis</keyword>
<keyword id="KW-0808">Transferase</keyword>
<evidence type="ECO:0000255" key="1">
    <source>
        <dbReference type="HAMAP-Rule" id="MF_00228"/>
    </source>
</evidence>
<reference key="1">
    <citation type="submission" date="2007-04" db="EMBL/GenBank/DDBJ databases">
        <title>Complete sequence of Roseiflexus sp. RS-1.</title>
        <authorList>
            <consortium name="US DOE Joint Genome Institute"/>
            <person name="Copeland A."/>
            <person name="Lucas S."/>
            <person name="Lapidus A."/>
            <person name="Barry K."/>
            <person name="Detter J.C."/>
            <person name="Glavina del Rio T."/>
            <person name="Hammon N."/>
            <person name="Israni S."/>
            <person name="Dalin E."/>
            <person name="Tice H."/>
            <person name="Pitluck S."/>
            <person name="Chertkov O."/>
            <person name="Brettin T."/>
            <person name="Bruce D."/>
            <person name="Han C."/>
            <person name="Schmutz J."/>
            <person name="Larimer F."/>
            <person name="Land M."/>
            <person name="Hauser L."/>
            <person name="Kyrpides N."/>
            <person name="Mikhailova N."/>
            <person name="Bryant D.A."/>
            <person name="Richardson P."/>
        </authorList>
    </citation>
    <scope>NUCLEOTIDE SEQUENCE [LARGE SCALE GENOMIC DNA]</scope>
    <source>
        <strain>RS-1</strain>
    </source>
</reference>
<protein>
    <recommendedName>
        <fullName evidence="1">Hydroxyethylthiazole kinase</fullName>
        <ecNumber evidence="1">2.7.1.50</ecNumber>
    </recommendedName>
    <alternativeName>
        <fullName evidence="1">4-methyl-5-beta-hydroxyethylthiazole kinase</fullName>
        <shortName evidence="1">TH kinase</shortName>
        <shortName evidence="1">Thz kinase</shortName>
    </alternativeName>
</protein>
<feature type="chain" id="PRO_0000336568" description="Hydroxyethylthiazole kinase">
    <location>
        <begin position="1"/>
        <end position="270"/>
    </location>
</feature>
<feature type="binding site" evidence="1">
    <location>
        <position position="47"/>
    </location>
    <ligand>
        <name>substrate</name>
    </ligand>
</feature>
<feature type="binding site" evidence="1">
    <location>
        <position position="123"/>
    </location>
    <ligand>
        <name>ATP</name>
        <dbReference type="ChEBI" id="CHEBI:30616"/>
    </ligand>
</feature>
<feature type="binding site" evidence="1">
    <location>
        <position position="169"/>
    </location>
    <ligand>
        <name>ATP</name>
        <dbReference type="ChEBI" id="CHEBI:30616"/>
    </ligand>
</feature>
<feature type="binding site" evidence="1">
    <location>
        <position position="196"/>
    </location>
    <ligand>
        <name>substrate</name>
    </ligand>
</feature>
<organism>
    <name type="scientific">Roseiflexus sp. (strain RS-1)</name>
    <dbReference type="NCBI Taxonomy" id="357808"/>
    <lineage>
        <taxon>Bacteria</taxon>
        <taxon>Bacillati</taxon>
        <taxon>Chloroflexota</taxon>
        <taxon>Chloroflexia</taxon>
        <taxon>Chloroflexales</taxon>
        <taxon>Roseiflexineae</taxon>
        <taxon>Roseiflexaceae</taxon>
        <taxon>Roseiflexus</taxon>
    </lineage>
</organism>
<comment type="function">
    <text evidence="1">Catalyzes the phosphorylation of the hydroxyl group of 4-methyl-5-beta-hydroxyethylthiazole (THZ).</text>
</comment>
<comment type="catalytic activity">
    <reaction evidence="1">
        <text>5-(2-hydroxyethyl)-4-methylthiazole + ATP = 4-methyl-5-(2-phosphooxyethyl)-thiazole + ADP + H(+)</text>
        <dbReference type="Rhea" id="RHEA:24212"/>
        <dbReference type="ChEBI" id="CHEBI:15378"/>
        <dbReference type="ChEBI" id="CHEBI:17957"/>
        <dbReference type="ChEBI" id="CHEBI:30616"/>
        <dbReference type="ChEBI" id="CHEBI:58296"/>
        <dbReference type="ChEBI" id="CHEBI:456216"/>
        <dbReference type="EC" id="2.7.1.50"/>
    </reaction>
</comment>
<comment type="cofactor">
    <cofactor evidence="1">
        <name>Mg(2+)</name>
        <dbReference type="ChEBI" id="CHEBI:18420"/>
    </cofactor>
</comment>
<comment type="pathway">
    <text evidence="1">Cofactor biosynthesis; thiamine diphosphate biosynthesis; 4-methyl-5-(2-phosphoethyl)-thiazole from 5-(2-hydroxyethyl)-4-methylthiazole: step 1/1.</text>
</comment>
<comment type="similarity">
    <text evidence="1">Belongs to the Thz kinase family.</text>
</comment>
<gene>
    <name evidence="1" type="primary">thiM</name>
    <name type="ordered locus">RoseRS_1926</name>
</gene>
<dbReference type="EC" id="2.7.1.50" evidence="1"/>
<dbReference type="EMBL" id="CP000686">
    <property type="protein sequence ID" value="ABQ90315.1"/>
    <property type="molecule type" value="Genomic_DNA"/>
</dbReference>
<dbReference type="RefSeq" id="WP_011956661.1">
    <property type="nucleotide sequence ID" value="NC_009523.1"/>
</dbReference>
<dbReference type="SMR" id="A5UUL2"/>
<dbReference type="STRING" id="357808.RoseRS_1926"/>
<dbReference type="KEGG" id="rrs:RoseRS_1926"/>
<dbReference type="eggNOG" id="COG2145">
    <property type="taxonomic scope" value="Bacteria"/>
</dbReference>
<dbReference type="HOGENOM" id="CLU_019943_0_1_0"/>
<dbReference type="OrthoDB" id="9778146at2"/>
<dbReference type="UniPathway" id="UPA00060">
    <property type="reaction ID" value="UER00139"/>
</dbReference>
<dbReference type="Proteomes" id="UP000006554">
    <property type="component" value="Chromosome"/>
</dbReference>
<dbReference type="GO" id="GO:0005524">
    <property type="term" value="F:ATP binding"/>
    <property type="evidence" value="ECO:0007669"/>
    <property type="project" value="UniProtKB-UniRule"/>
</dbReference>
<dbReference type="GO" id="GO:0004417">
    <property type="term" value="F:hydroxyethylthiazole kinase activity"/>
    <property type="evidence" value="ECO:0007669"/>
    <property type="project" value="UniProtKB-UniRule"/>
</dbReference>
<dbReference type="GO" id="GO:0000287">
    <property type="term" value="F:magnesium ion binding"/>
    <property type="evidence" value="ECO:0007669"/>
    <property type="project" value="UniProtKB-UniRule"/>
</dbReference>
<dbReference type="GO" id="GO:0009228">
    <property type="term" value="P:thiamine biosynthetic process"/>
    <property type="evidence" value="ECO:0007669"/>
    <property type="project" value="UniProtKB-KW"/>
</dbReference>
<dbReference type="GO" id="GO:0009229">
    <property type="term" value="P:thiamine diphosphate biosynthetic process"/>
    <property type="evidence" value="ECO:0007669"/>
    <property type="project" value="UniProtKB-UniRule"/>
</dbReference>
<dbReference type="CDD" id="cd01170">
    <property type="entry name" value="THZ_kinase"/>
    <property type="match status" value="1"/>
</dbReference>
<dbReference type="Gene3D" id="3.40.1190.20">
    <property type="match status" value="1"/>
</dbReference>
<dbReference type="HAMAP" id="MF_00228">
    <property type="entry name" value="Thz_kinase"/>
    <property type="match status" value="1"/>
</dbReference>
<dbReference type="InterPro" id="IPR000417">
    <property type="entry name" value="Hyethyz_kinase"/>
</dbReference>
<dbReference type="InterPro" id="IPR029056">
    <property type="entry name" value="Ribokinase-like"/>
</dbReference>
<dbReference type="NCBIfam" id="NF006830">
    <property type="entry name" value="PRK09355.1"/>
    <property type="match status" value="1"/>
</dbReference>
<dbReference type="NCBIfam" id="TIGR00694">
    <property type="entry name" value="thiM"/>
    <property type="match status" value="1"/>
</dbReference>
<dbReference type="Pfam" id="PF02110">
    <property type="entry name" value="HK"/>
    <property type="match status" value="1"/>
</dbReference>
<dbReference type="PIRSF" id="PIRSF000513">
    <property type="entry name" value="Thz_kinase"/>
    <property type="match status" value="1"/>
</dbReference>
<dbReference type="PRINTS" id="PR01099">
    <property type="entry name" value="HYETHTZKNASE"/>
</dbReference>
<dbReference type="SUPFAM" id="SSF53613">
    <property type="entry name" value="Ribokinase-like"/>
    <property type="match status" value="1"/>
</dbReference>
<accession>A5UUL2</accession>
<proteinExistence type="inferred from homology"/>
<sequence length="270" mass="28278">MDPINQRIGDMLARIRATRPLIHHITNLVVMNDTANVTLHVGGLPVMAHDAEEVAEMVAHAGALVLNVGTLSPDWIESMLIAGRRANELQTPVVLDPVGAGATQLRTRTNLELLRSLRIAVVRGNGGEIGALSGEGGEVKGVESVSGPEDPLTAARRLAQTYHTVVALTGARDIITDGERVLTVNNGHIWLTTLTGTGCMATTMVAAFAAVERDYLLAAAGGLAMFGLAAELAAEKAHGPASFKVALFDQIYNLTPEQVANGARVVEGGS</sequence>
<name>THIM_ROSS1</name>